<organism>
    <name type="scientific">Oenothera argillicola</name>
    <name type="common">Appalachian evening primrose</name>
    <dbReference type="NCBI Taxonomy" id="3940"/>
    <lineage>
        <taxon>Eukaryota</taxon>
        <taxon>Viridiplantae</taxon>
        <taxon>Streptophyta</taxon>
        <taxon>Embryophyta</taxon>
        <taxon>Tracheophyta</taxon>
        <taxon>Spermatophyta</taxon>
        <taxon>Magnoliopsida</taxon>
        <taxon>eudicotyledons</taxon>
        <taxon>Gunneridae</taxon>
        <taxon>Pentapetalae</taxon>
        <taxon>rosids</taxon>
        <taxon>malvids</taxon>
        <taxon>Myrtales</taxon>
        <taxon>Onagraceae</taxon>
        <taxon>Onagroideae</taxon>
        <taxon>Onagreae</taxon>
        <taxon>Oenothera</taxon>
    </lineage>
</organism>
<accession>B0Z4N8</accession>
<dbReference type="EMBL" id="EU262887">
    <property type="protein sequence ID" value="ABW98716.1"/>
    <property type="molecule type" value="Genomic_DNA"/>
</dbReference>
<dbReference type="RefSeq" id="YP_001687149.1">
    <property type="nucleotide sequence ID" value="NC_010358.2"/>
</dbReference>
<dbReference type="SMR" id="B0Z4N8"/>
<dbReference type="GeneID" id="5951865"/>
<dbReference type="GO" id="GO:0009706">
    <property type="term" value="C:chloroplast inner membrane"/>
    <property type="evidence" value="ECO:0007669"/>
    <property type="project" value="UniProtKB-SubCell"/>
</dbReference>
<dbReference type="GO" id="GO:0015297">
    <property type="term" value="F:antiporter activity"/>
    <property type="evidence" value="ECO:0007669"/>
    <property type="project" value="UniProtKB-KW"/>
</dbReference>
<dbReference type="GO" id="GO:0015078">
    <property type="term" value="F:proton transmembrane transporter activity"/>
    <property type="evidence" value="ECO:0007669"/>
    <property type="project" value="UniProtKB-UniRule"/>
</dbReference>
<dbReference type="GO" id="GO:0006813">
    <property type="term" value="P:potassium ion transport"/>
    <property type="evidence" value="ECO:0007669"/>
    <property type="project" value="UniProtKB-UniRule"/>
</dbReference>
<dbReference type="HAMAP" id="MF_01308">
    <property type="entry name" value="CemA_PxcA"/>
    <property type="match status" value="1"/>
</dbReference>
<dbReference type="InterPro" id="IPR004282">
    <property type="entry name" value="CemA"/>
</dbReference>
<dbReference type="PANTHER" id="PTHR33650:SF2">
    <property type="entry name" value="CHLOROPLAST ENVELOPE MEMBRANE PROTEIN"/>
    <property type="match status" value="1"/>
</dbReference>
<dbReference type="PANTHER" id="PTHR33650">
    <property type="entry name" value="CHLOROPLAST ENVELOPE MEMBRANE PROTEIN-RELATED"/>
    <property type="match status" value="1"/>
</dbReference>
<dbReference type="Pfam" id="PF03040">
    <property type="entry name" value="CemA"/>
    <property type="match status" value="1"/>
</dbReference>
<reference key="1">
    <citation type="journal article" date="2008" name="Nucleic Acids Res.">
        <title>The complete nucleotide sequences of the five genetically distinct plastid genomes of Oenothera, subsection Oenothera: I. Sequence evaluation and plastome evolution.</title>
        <authorList>
            <person name="Greiner S."/>
            <person name="Wang X."/>
            <person name="Rauwolf U."/>
            <person name="Silber M.V."/>
            <person name="Mayer K."/>
            <person name="Meurer J."/>
            <person name="Haberer G."/>
            <person name="Herrmann R.G."/>
        </authorList>
    </citation>
    <scope>NUCLEOTIDE SEQUENCE [LARGE SCALE GENOMIC DNA]</scope>
    <scope>IDENTIFICATION BY IMMUNOBLOTTING</scope>
    <source>
        <strain>cv. Douthat 1</strain>
    </source>
</reference>
<name>CEMA_OENAR</name>
<proteinExistence type="evidence at protein level"/>
<geneLocation type="chloroplast"/>
<sequence>MVFFPWWISLLFNKGLESWVTNWWNTTHSETFLTDMQEKSILDKFIELEELLLLDEMINEYPETHLQTLRIGIHKEMVRLIKMRNEDHIHTILHLSTNIICFIIFRGYSILGNKELLILNSWMQEFLYNLSDTIKAFSILLLTDFCIGFHSPHGWELMIAYVYKDFGFAQNDQIISGLVSTFPVILDTIFKYWIFRYLNRVSPSLVVIYDSMND</sequence>
<evidence type="ECO:0000255" key="1">
    <source>
        <dbReference type="HAMAP-Rule" id="MF_01308"/>
    </source>
</evidence>
<evidence type="ECO:0000305" key="2"/>
<comment type="function">
    <text evidence="1">Contributes to K(+)/H(+) antiport activity by supporting proton efflux to control proton extrusion and homeostasis in chloroplasts in a light-dependent manner to modulate photosynthesis. Prevents excessive induction of non-photochemical quenching (NPQ) under continuous-light conditions. Indirectly promotes efficient inorganic carbon uptake into chloroplasts.</text>
</comment>
<comment type="catalytic activity">
    <reaction evidence="1">
        <text>K(+)(in) + H(+)(out) = K(+)(out) + H(+)(in)</text>
        <dbReference type="Rhea" id="RHEA:29467"/>
        <dbReference type="ChEBI" id="CHEBI:15378"/>
        <dbReference type="ChEBI" id="CHEBI:29103"/>
    </reaction>
</comment>
<comment type="subcellular location">
    <subcellularLocation>
        <location evidence="1">Plastid</location>
        <location evidence="1">Chloroplast inner membrane</location>
        <topology evidence="1">Multi-pass membrane protein</topology>
    </subcellularLocation>
</comment>
<comment type="similarity">
    <text evidence="1 2">Belongs to the CemA family.</text>
</comment>
<gene>
    <name evidence="1" type="primary">cemA</name>
</gene>
<feature type="chain" id="PRO_0000346544" description="Potassium/proton antiporter CemA">
    <location>
        <begin position="1"/>
        <end position="214"/>
    </location>
</feature>
<feature type="transmembrane region" description="Helical" evidence="1">
    <location>
        <begin position="92"/>
        <end position="112"/>
    </location>
</feature>
<feature type="transmembrane region" description="Helical" evidence="1">
    <location>
        <begin position="174"/>
        <end position="194"/>
    </location>
</feature>
<keyword id="KW-0050">Antiport</keyword>
<keyword id="KW-0150">Chloroplast</keyword>
<keyword id="KW-0375">Hydrogen ion transport</keyword>
<keyword id="KW-0406">Ion transport</keyword>
<keyword id="KW-0472">Membrane</keyword>
<keyword id="KW-0934">Plastid</keyword>
<keyword id="KW-1001">Plastid inner membrane</keyword>
<keyword id="KW-0630">Potassium</keyword>
<keyword id="KW-0633">Potassium transport</keyword>
<keyword id="KW-0812">Transmembrane</keyword>
<keyword id="KW-1133">Transmembrane helix</keyword>
<keyword id="KW-0813">Transport</keyword>
<protein>
    <recommendedName>
        <fullName evidence="1">Potassium/proton antiporter CemA</fullName>
    </recommendedName>
    <alternativeName>
        <fullName evidence="1">Chloroplast envelope membrane protein A</fullName>
        <shortName evidence="1">CemA</shortName>
    </alternativeName>
</protein>